<evidence type="ECO:0000250" key="1"/>
<evidence type="ECO:0000255" key="2"/>
<evidence type="ECO:0000256" key="3">
    <source>
        <dbReference type="SAM" id="MobiDB-lite"/>
    </source>
</evidence>
<evidence type="ECO:0000305" key="4"/>
<name>AQY1_YEAS8</name>
<feature type="chain" id="PRO_0000391663" description="Aquaporin-1">
    <location>
        <begin position="1"/>
        <end position="327"/>
    </location>
</feature>
<feature type="topological domain" description="Cytoplasmic" evidence="1">
    <location>
        <begin position="1"/>
        <end position="48"/>
    </location>
</feature>
<feature type="transmembrane region" description="Helical; Name=1" evidence="2">
    <location>
        <begin position="49"/>
        <end position="69"/>
    </location>
</feature>
<feature type="topological domain" description="Extracellular" evidence="1">
    <location>
        <begin position="70"/>
        <end position="91"/>
    </location>
</feature>
<feature type="transmembrane region" description="Helical; Name=2" evidence="2">
    <location>
        <begin position="92"/>
        <end position="112"/>
    </location>
</feature>
<feature type="topological domain" description="Cytoplasmic" evidence="1">
    <location>
        <begin position="113"/>
        <end position="136"/>
    </location>
</feature>
<feature type="transmembrane region" description="Helical; Name=3" evidence="2">
    <location>
        <begin position="137"/>
        <end position="157"/>
    </location>
</feature>
<feature type="topological domain" description="Extracellular" evidence="1">
    <location>
        <begin position="158"/>
        <end position="176"/>
    </location>
</feature>
<feature type="transmembrane region" description="Helical; Name=4" evidence="2">
    <location>
        <begin position="177"/>
        <end position="197"/>
    </location>
</feature>
<feature type="topological domain" description="Cytoplasmic" evidence="1">
    <location>
        <begin position="198"/>
        <end position="203"/>
    </location>
</feature>
<feature type="transmembrane region" description="Helical; Name=5" evidence="2">
    <location>
        <begin position="204"/>
        <end position="224"/>
    </location>
</feature>
<feature type="topological domain" description="Extracellular" evidence="1">
    <location>
        <begin position="225"/>
        <end position="248"/>
    </location>
</feature>
<feature type="transmembrane region" description="Helical; Name=6" evidence="2">
    <location>
        <begin position="249"/>
        <end position="269"/>
    </location>
</feature>
<feature type="topological domain" description="Cytoplasmic" evidence="1">
    <location>
        <begin position="270"/>
        <end position="327"/>
    </location>
</feature>
<feature type="region of interest" description="Disordered" evidence="3">
    <location>
        <begin position="1"/>
        <end position="34"/>
    </location>
</feature>
<feature type="short sequence motif" description="NPA 1">
    <location>
        <begin position="118"/>
        <end position="120"/>
    </location>
</feature>
<feature type="short sequence motif" description="NPA 2">
    <location>
        <begin position="230"/>
        <end position="232"/>
    </location>
</feature>
<sequence>MSSNDSNDTDKQHTRLDPTGVDDAYIPPEQPETKHHRFKISKDTLRNHFIAAAGEFCGTFMFLWCAYVICNVANHDVALVAAPDGSHPGQLIMIAIGFGFSVMFSIWCFAGVSGGALNPAVSLSLCLARAVSPTRCVVMWVSQIVAGMAAGGAASAMTPGEVLFANSLGLGCSRTRGLFLEMFGTAILCLTVLMTAVEKRETNFMAALPIGISLFIAHVALTAYTGTGVNPARSLGAAVAARYFPHYHWIYWIGPLLGSILAWSVWQLLQILDYTTYVTAEKAASTKEKAQKKVKPAVPLLWLKSNFSLLFFISRSLALNVIIFGKN</sequence>
<accession>C8ZJM1</accession>
<protein>
    <recommendedName>
        <fullName>Aquaporin-1</fullName>
    </recommendedName>
</protein>
<reference key="1">
    <citation type="journal article" date="2009" name="Proc. Natl. Acad. Sci. U.S.A.">
        <title>Eukaryote-to-eukaryote gene transfer events revealed by the genome sequence of the wine yeast Saccharomyces cerevisiae EC1118.</title>
        <authorList>
            <person name="Novo M."/>
            <person name="Bigey F."/>
            <person name="Beyne E."/>
            <person name="Galeote V."/>
            <person name="Gavory F."/>
            <person name="Mallet S."/>
            <person name="Cambon B."/>
            <person name="Legras J.-L."/>
            <person name="Wincker P."/>
            <person name="Casaregola S."/>
            <person name="Dequin S."/>
        </authorList>
    </citation>
    <scope>NUCLEOTIDE SEQUENCE [LARGE SCALE GENOMIC DNA]</scope>
    <source>
        <strain>Lalvin EC1118 / Prise de mousse</strain>
    </source>
</reference>
<comment type="function">
    <text>Water channel required to facilitate the transport of water across membranes. Involved in sporulation, freeze tolerance and osmotolerance. Is non-functional in most laboratory strains.</text>
</comment>
<comment type="subcellular location">
    <subcellularLocation>
        <location>Endoplasmic reticulum membrane</location>
        <topology>Multi-pass membrane protein</topology>
    </subcellularLocation>
    <subcellularLocation>
        <location>Cell membrane</location>
        <topology>Multi-pass membrane protein</topology>
    </subcellularLocation>
</comment>
<comment type="developmental stage">
    <text>Expressed in spores.</text>
</comment>
<comment type="domain">
    <text>Aquaporins contain two tandem repeats each containing three membrane-spanning domains and a pore-forming loop with the signature motif Asn-Pro-Ala (NPA).</text>
</comment>
<comment type="similarity">
    <text evidence="4">Belongs to the MIP/aquaporin (TC 1.A.8) family.</text>
</comment>
<gene>
    <name type="primary">AQY1</name>
    <name type="ORF">EC1118_1P2_5391g</name>
</gene>
<organism>
    <name type="scientific">Saccharomyces cerevisiae (strain Lalvin EC1118 / Prise de mousse)</name>
    <name type="common">Baker's yeast</name>
    <dbReference type="NCBI Taxonomy" id="643680"/>
    <lineage>
        <taxon>Eukaryota</taxon>
        <taxon>Fungi</taxon>
        <taxon>Dikarya</taxon>
        <taxon>Ascomycota</taxon>
        <taxon>Saccharomycotina</taxon>
        <taxon>Saccharomycetes</taxon>
        <taxon>Saccharomycetales</taxon>
        <taxon>Saccharomycetaceae</taxon>
        <taxon>Saccharomyces</taxon>
    </lineage>
</organism>
<proteinExistence type="evidence at transcript level"/>
<dbReference type="EMBL" id="FN394217">
    <property type="protein sequence ID" value="CAY87152.1"/>
    <property type="molecule type" value="Genomic_DNA"/>
</dbReference>
<dbReference type="SMR" id="C8ZJM1"/>
<dbReference type="HOGENOM" id="CLU_020019_1_7_1"/>
<dbReference type="OrthoDB" id="27219at4893"/>
<dbReference type="Proteomes" id="UP000000286">
    <property type="component" value="Chromosome XVI, Scaffold EC1118_1P2"/>
</dbReference>
<dbReference type="GO" id="GO:0005789">
    <property type="term" value="C:endoplasmic reticulum membrane"/>
    <property type="evidence" value="ECO:0007669"/>
    <property type="project" value="UniProtKB-SubCell"/>
</dbReference>
<dbReference type="GO" id="GO:0005886">
    <property type="term" value="C:plasma membrane"/>
    <property type="evidence" value="ECO:0007669"/>
    <property type="project" value="UniProtKB-SubCell"/>
</dbReference>
<dbReference type="GO" id="GO:0015250">
    <property type="term" value="F:water channel activity"/>
    <property type="evidence" value="ECO:0007669"/>
    <property type="project" value="TreeGrafter"/>
</dbReference>
<dbReference type="FunFam" id="1.20.1080.10:FF:000014">
    <property type="entry name" value="Aquaporin 1"/>
    <property type="match status" value="1"/>
</dbReference>
<dbReference type="Gene3D" id="1.20.1080.10">
    <property type="entry name" value="Glycerol uptake facilitator protein"/>
    <property type="match status" value="1"/>
</dbReference>
<dbReference type="InterPro" id="IPR023271">
    <property type="entry name" value="Aquaporin-like"/>
</dbReference>
<dbReference type="InterPro" id="IPR034294">
    <property type="entry name" value="Aquaporin_transptr"/>
</dbReference>
<dbReference type="InterPro" id="IPR000425">
    <property type="entry name" value="MIP"/>
</dbReference>
<dbReference type="InterPro" id="IPR022357">
    <property type="entry name" value="MIP_CS"/>
</dbReference>
<dbReference type="NCBIfam" id="TIGR00861">
    <property type="entry name" value="MIP"/>
    <property type="match status" value="1"/>
</dbReference>
<dbReference type="PANTHER" id="PTHR19139">
    <property type="entry name" value="AQUAPORIN TRANSPORTER"/>
    <property type="match status" value="1"/>
</dbReference>
<dbReference type="PANTHER" id="PTHR19139:SF199">
    <property type="entry name" value="MIP17260P"/>
    <property type="match status" value="1"/>
</dbReference>
<dbReference type="Pfam" id="PF00230">
    <property type="entry name" value="MIP"/>
    <property type="match status" value="1"/>
</dbReference>
<dbReference type="PRINTS" id="PR00783">
    <property type="entry name" value="MINTRINSICP"/>
</dbReference>
<dbReference type="SUPFAM" id="SSF81338">
    <property type="entry name" value="Aquaporin-like"/>
    <property type="match status" value="1"/>
</dbReference>
<dbReference type="PROSITE" id="PS00221">
    <property type="entry name" value="MIP"/>
    <property type="match status" value="1"/>
</dbReference>
<keyword id="KW-1003">Cell membrane</keyword>
<keyword id="KW-0256">Endoplasmic reticulum</keyword>
<keyword id="KW-0472">Membrane</keyword>
<keyword id="KW-0677">Repeat</keyword>
<keyword id="KW-0812">Transmembrane</keyword>
<keyword id="KW-1133">Transmembrane helix</keyword>
<keyword id="KW-0813">Transport</keyword>